<comment type="function">
    <text evidence="2">Part of the yraHIJK fimbrial operon. Could contribute to adhesion to various surfaces in specific environmental niches. Increases adhesion to eukaryotic T24 bladder epithelial cells in the absence of fim operon.</text>
</comment>
<comment type="subcellular location">
    <subcellularLocation>
        <location evidence="3">Fimbrium</location>
    </subcellularLocation>
</comment>
<comment type="induction">
    <text evidence="2">Expression is negatively regulated by H-NS and subjected to cAMP receptor protein (CRP)-mediated catabolite repression.</text>
</comment>
<comment type="disruption phenotype">
    <text evidence="2">Deletion of the operon under classical laboratory conditions does not result in any major effect on E.coli capacity to form biofilms compared with the wild-type strain.</text>
</comment>
<comment type="miscellaneous">
    <text evidence="4">The operon is cryptic under classical laboratory conditions, but is functional when constitutively expressed.</text>
</comment>
<comment type="similarity">
    <text evidence="3">Belongs to the fimbrial protein family.</text>
</comment>
<comment type="sequence caution" evidence="3">
    <conflict type="erroneous initiation">
        <sequence resource="EMBL-CDS" id="AAA57948"/>
    </conflict>
    <text>Extended N-terminus.</text>
</comment>
<reference key="1">
    <citation type="journal article" date="1997" name="Science">
        <title>The complete genome sequence of Escherichia coli K-12.</title>
        <authorList>
            <person name="Blattner F.R."/>
            <person name="Plunkett G. III"/>
            <person name="Bloch C.A."/>
            <person name="Perna N.T."/>
            <person name="Burland V."/>
            <person name="Riley M."/>
            <person name="Collado-Vides J."/>
            <person name="Glasner J.D."/>
            <person name="Rode C.K."/>
            <person name="Mayhew G.F."/>
            <person name="Gregor J."/>
            <person name="Davis N.W."/>
            <person name="Kirkpatrick H.A."/>
            <person name="Goeden M.A."/>
            <person name="Rose D.J."/>
            <person name="Mau B."/>
            <person name="Shao Y."/>
        </authorList>
    </citation>
    <scope>NUCLEOTIDE SEQUENCE [LARGE SCALE GENOMIC DNA]</scope>
    <source>
        <strain>K12 / MG1655 / ATCC 47076</strain>
    </source>
</reference>
<reference key="2">
    <citation type="journal article" date="2006" name="Mol. Syst. Biol.">
        <title>Highly accurate genome sequences of Escherichia coli K-12 strains MG1655 and W3110.</title>
        <authorList>
            <person name="Hayashi K."/>
            <person name="Morooka N."/>
            <person name="Yamamoto Y."/>
            <person name="Fujita K."/>
            <person name="Isono K."/>
            <person name="Choi S."/>
            <person name="Ohtsubo E."/>
            <person name="Baba T."/>
            <person name="Wanner B.L."/>
            <person name="Mori H."/>
            <person name="Horiuchi T."/>
        </authorList>
    </citation>
    <scope>NUCLEOTIDE SEQUENCE [LARGE SCALE GENOMIC DNA]</scope>
    <source>
        <strain>K12 / W3110 / ATCC 27325 / DSM 5911</strain>
    </source>
</reference>
<reference key="3">
    <citation type="journal article" date="2010" name="Environ. Microbiol.">
        <title>Escherichia coli K-12 possesses multiple cryptic but functional chaperone-usher fimbriae with distinct surface specificities.</title>
        <authorList>
            <person name="Korea C.G."/>
            <person name="Badouraly R."/>
            <person name="Prevost M.C."/>
            <person name="Ghigo J.M."/>
            <person name="Beloin C."/>
        </authorList>
    </citation>
    <scope>FUNCTION</scope>
    <scope>INDUCTION</scope>
    <scope>DISRUPTION PHENOTYPE</scope>
    <source>
        <strain>K12 / MG1655 / ATCC 47076</strain>
    </source>
</reference>
<gene>
    <name type="primary">yraK</name>
    <name type="ordered locus">b3145</name>
    <name type="ordered locus">JW3114</name>
</gene>
<protein>
    <recommendedName>
        <fullName>Uncharacterized fimbrial-like protein YraK</fullName>
    </recommendedName>
</protein>
<accession>P43319</accession>
<accession>Q2M965</accession>
<evidence type="ECO:0000255" key="1">
    <source>
        <dbReference type="PROSITE-ProRule" id="PRU00303"/>
    </source>
</evidence>
<evidence type="ECO:0000269" key="2">
    <source>
    </source>
</evidence>
<evidence type="ECO:0000305" key="3"/>
<evidence type="ECO:0000305" key="4">
    <source>
    </source>
</evidence>
<proteinExistence type="evidence at transcript level"/>
<dbReference type="EMBL" id="U18997">
    <property type="protein sequence ID" value="AAA57948.1"/>
    <property type="status" value="ALT_INIT"/>
    <property type="molecule type" value="Genomic_DNA"/>
</dbReference>
<dbReference type="EMBL" id="U00096">
    <property type="protein sequence ID" value="AAC76179.1"/>
    <property type="molecule type" value="Genomic_DNA"/>
</dbReference>
<dbReference type="EMBL" id="AP009048">
    <property type="protein sequence ID" value="BAE77191.1"/>
    <property type="molecule type" value="Genomic_DNA"/>
</dbReference>
<dbReference type="PIR" id="E65104">
    <property type="entry name" value="E65104"/>
</dbReference>
<dbReference type="RefSeq" id="NP_417614.1">
    <property type="nucleotide sequence ID" value="NC_000913.3"/>
</dbReference>
<dbReference type="RefSeq" id="WP_000816992.1">
    <property type="nucleotide sequence ID" value="NZ_LN832404.1"/>
</dbReference>
<dbReference type="SMR" id="P43319"/>
<dbReference type="BioGRID" id="4261994">
    <property type="interactions" value="426"/>
</dbReference>
<dbReference type="FunCoup" id="P43319">
    <property type="interactions" value="115"/>
</dbReference>
<dbReference type="STRING" id="511145.b3145"/>
<dbReference type="PaxDb" id="511145-b3145"/>
<dbReference type="EnsemblBacteria" id="AAC76179">
    <property type="protein sequence ID" value="AAC76179"/>
    <property type="gene ID" value="b3145"/>
</dbReference>
<dbReference type="GeneID" id="947654"/>
<dbReference type="KEGG" id="ecj:JW3114"/>
<dbReference type="KEGG" id="eco:b3145"/>
<dbReference type="KEGG" id="ecoc:C3026_17135"/>
<dbReference type="PATRIC" id="fig|1411691.4.peg.3585"/>
<dbReference type="EchoBASE" id="EB2629"/>
<dbReference type="eggNOG" id="COG3539">
    <property type="taxonomic scope" value="Bacteria"/>
</dbReference>
<dbReference type="HOGENOM" id="CLU_066608_0_0_6"/>
<dbReference type="InParanoid" id="P43319"/>
<dbReference type="OMA" id="TIACNCT"/>
<dbReference type="OrthoDB" id="8582771at2"/>
<dbReference type="PhylomeDB" id="P43319"/>
<dbReference type="BioCyc" id="EcoCyc:G7640-MONOMER"/>
<dbReference type="PRO" id="PR:P43319"/>
<dbReference type="Proteomes" id="UP000000625">
    <property type="component" value="Chromosome"/>
</dbReference>
<dbReference type="GO" id="GO:0009289">
    <property type="term" value="C:pilus"/>
    <property type="evidence" value="ECO:0000318"/>
    <property type="project" value="GO_Central"/>
</dbReference>
<dbReference type="GO" id="GO:0043709">
    <property type="term" value="P:cell adhesion involved in single-species biofilm formation"/>
    <property type="evidence" value="ECO:0000315"/>
    <property type="project" value="EcoCyc"/>
</dbReference>
<dbReference type="FunFam" id="2.60.40.1090:FF:000009">
    <property type="entry name" value="Fimbrial family protein"/>
    <property type="match status" value="1"/>
</dbReference>
<dbReference type="Gene3D" id="2.60.40.1090">
    <property type="entry name" value="Fimbrial-type adhesion domain"/>
    <property type="match status" value="1"/>
</dbReference>
<dbReference type="InterPro" id="IPR000259">
    <property type="entry name" value="Adhesion_dom_fimbrial"/>
</dbReference>
<dbReference type="InterPro" id="IPR036937">
    <property type="entry name" value="Adhesion_dom_fimbrial_sf"/>
</dbReference>
<dbReference type="InterPro" id="IPR008966">
    <property type="entry name" value="Adhesion_dom_sf"/>
</dbReference>
<dbReference type="InterPro" id="IPR050263">
    <property type="entry name" value="Bact_Fimbrial_Adh_Pro"/>
</dbReference>
<dbReference type="PANTHER" id="PTHR33420">
    <property type="entry name" value="FIMBRIAL SUBUNIT ELFA-RELATED"/>
    <property type="match status" value="1"/>
</dbReference>
<dbReference type="PANTHER" id="PTHR33420:SF31">
    <property type="entry name" value="TYPE 1 FIMBRIN D-MANNOSE SPECIFIC ADHESIN"/>
    <property type="match status" value="1"/>
</dbReference>
<dbReference type="Pfam" id="PF00419">
    <property type="entry name" value="Fimbrial"/>
    <property type="match status" value="1"/>
</dbReference>
<dbReference type="SUPFAM" id="SSF49401">
    <property type="entry name" value="Bacterial adhesins"/>
    <property type="match status" value="1"/>
</dbReference>
<dbReference type="PROSITE" id="PS51257">
    <property type="entry name" value="PROKAR_LIPOPROTEIN"/>
    <property type="match status" value="1"/>
</dbReference>
<organism>
    <name type="scientific">Escherichia coli (strain K12)</name>
    <dbReference type="NCBI Taxonomy" id="83333"/>
    <lineage>
        <taxon>Bacteria</taxon>
        <taxon>Pseudomonadati</taxon>
        <taxon>Pseudomonadota</taxon>
        <taxon>Gammaproteobacteria</taxon>
        <taxon>Enterobacterales</taxon>
        <taxon>Enterobacteriaceae</taxon>
        <taxon>Escherichia</taxon>
    </lineage>
</organism>
<feature type="signal peptide" evidence="1">
    <location>
        <begin position="1"/>
        <end position="20"/>
    </location>
</feature>
<feature type="chain" id="PRO_0000013908" description="Uncharacterized fimbrial-like protein YraK">
    <location>
        <begin position="21"/>
        <end position="363"/>
    </location>
</feature>
<keyword id="KW-0281">Fimbrium</keyword>
<keyword id="KW-1185">Reference proteome</keyword>
<keyword id="KW-0732">Signal</keyword>
<name>YRAK_ECOLI</name>
<sequence>MKRAPLITGLLLISTSCAYASSGGCGADSTSGATNYSSVVDDVTVNQTDNVTGREFTSATLSSTNWQYACSCSAGKAVKLVYMVSPVLTTTGHQTGYYKLNDSLDIKTTLQANDIPGLTTDQVVSVNTRFTQIKNNTVYSAATQTGVCQGDTSRYGPVNIGANTTFTLYVTKPFLGSMTIPKTDIAVIKGAWVDGMGSPSTGDFHDLVKLSIQGNLTAPQSCKINQGDVIKVNFGFINGQKFTTRNAMPDGFTPVDFDITYDCGDTSKIKNSLQMRIDGTTGVVDQYNLVARRRSSDNVPDVGIRIENLGGGVANIPFQNGILPVDPSGHGTVNMRAWPVNLVGGELETGKFQGTATITVIVR</sequence>